<protein>
    <recommendedName>
        <fullName>Interferon gamma</fullName>
        <shortName>IFN-gamma</shortName>
    </recommendedName>
    <alternativeName>
        <fullName>Immune interferon</fullName>
    </alternativeName>
</protein>
<comment type="function">
    <text evidence="1 2">Type II interferon produced by immune cells such as T-cells and NK cells that plays crucial roles in antimicrobial, antiviral, and antitumor responses by activating effector immune cells and enhancing antigen presentation. Primarily signals through the JAK-STAT pathway after interaction with its receptor IFNGR1 to affect gene regulation. Upon IFNG binding, IFNGR1 intracellular domain opens out to allow association of downstream signaling components JAK2, JAK1 and STAT1, leading to STAT1 activation, nuclear translocation and transcription of IFNG-regulated genes. Many of the induced genes are transcription factors such as IRF1 that are able to further drive regulation of a next wave of transcription. Plays a role in class I antigen presentation pathway by inducing a replacement of catalytic proteasome subunits with immunoproteasome subunits. In turn, increases the quantity, quality, and repertoire of peptides for class I MHC loading. Increases the efficiency of peptide generation also by inducing the expression of activator PA28 that associates with the proteasome and alters its proteolytic cleavage preference. Up-regulates as well MHC II complexes on the cell surface by promoting expression of several key molecules such as cathepsins B/CTSB, H/CTSH, and L/CTSL (By similarity). Participates in the regulation of hematopoietic stem cells during development and under homeostatic conditions by affecting their development, quiescence, and differentiation (By similarity).</text>
</comment>
<comment type="subunit">
    <text evidence="1">Homodimer. Interacts with IFNGR1 (via extracellular domain); this interaction promotes IFNGR1 dimerization.</text>
</comment>
<comment type="subcellular location">
    <subcellularLocation>
        <location evidence="1">Secreted</location>
    </subcellularLocation>
</comment>
<comment type="similarity">
    <text evidence="4">Belongs to the type II (or gamma) interferon family.</text>
</comment>
<evidence type="ECO:0000250" key="1">
    <source>
        <dbReference type="UniProtKB" id="P01579"/>
    </source>
</evidence>
<evidence type="ECO:0000250" key="2">
    <source>
        <dbReference type="UniProtKB" id="P01580"/>
    </source>
</evidence>
<evidence type="ECO:0000255" key="3"/>
<evidence type="ECO:0000305" key="4"/>
<reference key="1">
    <citation type="journal article" date="1999" name="Mol. Immunol.">
        <title>A potent neutralizing monoclonal antibody can discriminate amongst IFNgamma from various primates with greater specificity than can the human IFNgamma receptor complex.</title>
        <authorList>
            <person name="Thakur A.B."/>
            <person name="Landolfi N.F."/>
        </authorList>
    </citation>
    <scope>NUCLEOTIDE SEQUENCE [MRNA]</scope>
    <source>
        <tissue>Blood</tissue>
    </source>
</reference>
<feature type="chain" id="PRO_0000159731" description="Interferon gamma">
    <location>
        <begin position="1"/>
        <end position="143"/>
    </location>
</feature>
<feature type="modified residue" description="Pyrrolidone carboxylic acid" evidence="1">
    <location>
        <position position="1"/>
    </location>
</feature>
<feature type="glycosylation site" description="N-linked (GlcNAc...) asparagine" evidence="3">
    <location>
        <position position="25"/>
    </location>
</feature>
<feature type="glycosylation site" description="N-linked (GlcNAc...) asparagine" evidence="3">
    <location>
        <position position="97"/>
    </location>
</feature>
<feature type="non-terminal residue">
    <location>
        <position position="1"/>
    </location>
</feature>
<keyword id="KW-0051">Antiviral defense</keyword>
<keyword id="KW-0202">Cytokine</keyword>
<keyword id="KW-0325">Glycoprotein</keyword>
<keyword id="KW-0341">Growth regulation</keyword>
<keyword id="KW-0873">Pyrrolidone carboxylic acid</keyword>
<keyword id="KW-1185">Reference proteome</keyword>
<keyword id="KW-0964">Secreted</keyword>
<dbReference type="EMBL" id="AF164788">
    <property type="protein sequence ID" value="AAD48014.1"/>
    <property type="molecule type" value="mRNA"/>
</dbReference>
<dbReference type="RefSeq" id="NP_001180594.1">
    <property type="nucleotide sequence ID" value="NM_001193665.1"/>
</dbReference>
<dbReference type="SMR" id="Q9TTB0"/>
<dbReference type="STRING" id="9598.ENSPTRP00000008822"/>
<dbReference type="GlyCosmos" id="Q9TTB0">
    <property type="glycosylation" value="2 sites, No reported glycans"/>
</dbReference>
<dbReference type="PaxDb" id="9598-ENSPTRP00000008822"/>
<dbReference type="GeneID" id="449517"/>
<dbReference type="KEGG" id="ptr:449517"/>
<dbReference type="CTD" id="3458"/>
<dbReference type="eggNOG" id="ENOG502SBGW">
    <property type="taxonomic scope" value="Eukaryota"/>
</dbReference>
<dbReference type="InParanoid" id="Q9TTB0"/>
<dbReference type="OrthoDB" id="3146at9604"/>
<dbReference type="Proteomes" id="UP000002277">
    <property type="component" value="Unplaced"/>
</dbReference>
<dbReference type="GO" id="GO:0005615">
    <property type="term" value="C:extracellular space"/>
    <property type="evidence" value="ECO:0000318"/>
    <property type="project" value="GO_Central"/>
</dbReference>
<dbReference type="GO" id="GO:0005125">
    <property type="term" value="F:cytokine activity"/>
    <property type="evidence" value="ECO:0000318"/>
    <property type="project" value="GO_Central"/>
</dbReference>
<dbReference type="GO" id="GO:0005133">
    <property type="term" value="F:type II interferon receptor binding"/>
    <property type="evidence" value="ECO:0007669"/>
    <property type="project" value="InterPro"/>
</dbReference>
<dbReference type="GO" id="GO:0002250">
    <property type="term" value="P:adaptive immune response"/>
    <property type="evidence" value="ECO:0000318"/>
    <property type="project" value="GO_Central"/>
</dbReference>
<dbReference type="GO" id="GO:0051607">
    <property type="term" value="P:defense response to virus"/>
    <property type="evidence" value="ECO:0007669"/>
    <property type="project" value="UniProtKB-KW"/>
</dbReference>
<dbReference type="GO" id="GO:0006959">
    <property type="term" value="P:humoral immune response"/>
    <property type="evidence" value="ECO:0000318"/>
    <property type="project" value="GO_Central"/>
</dbReference>
<dbReference type="GO" id="GO:0010508">
    <property type="term" value="P:positive regulation of autophagy"/>
    <property type="evidence" value="ECO:0000250"/>
    <property type="project" value="UniProtKB"/>
</dbReference>
<dbReference type="FunFam" id="1.20.1250.10:FF:000007">
    <property type="entry name" value="Interferon gamma"/>
    <property type="match status" value="1"/>
</dbReference>
<dbReference type="Gene3D" id="1.20.1250.10">
    <property type="match status" value="1"/>
</dbReference>
<dbReference type="InterPro" id="IPR009079">
    <property type="entry name" value="4_helix_cytokine-like_core"/>
</dbReference>
<dbReference type="InterPro" id="IPR002069">
    <property type="entry name" value="Interferon_gamma"/>
</dbReference>
<dbReference type="PANTHER" id="PTHR11419">
    <property type="entry name" value="INTERFERON GAMMA"/>
    <property type="match status" value="1"/>
</dbReference>
<dbReference type="PANTHER" id="PTHR11419:SF0">
    <property type="entry name" value="INTERFERON GAMMA"/>
    <property type="match status" value="1"/>
</dbReference>
<dbReference type="Pfam" id="PF00714">
    <property type="entry name" value="IFN-gamma"/>
    <property type="match status" value="1"/>
</dbReference>
<dbReference type="PIRSF" id="PIRSF001936">
    <property type="entry name" value="IFN-gamma"/>
    <property type="match status" value="1"/>
</dbReference>
<dbReference type="SUPFAM" id="SSF47266">
    <property type="entry name" value="4-helical cytokines"/>
    <property type="match status" value="1"/>
</dbReference>
<proteinExistence type="evidence at transcript level"/>
<accession>Q9TTB0</accession>
<organism>
    <name type="scientific">Pan troglodytes</name>
    <name type="common">Chimpanzee</name>
    <dbReference type="NCBI Taxonomy" id="9598"/>
    <lineage>
        <taxon>Eukaryota</taxon>
        <taxon>Metazoa</taxon>
        <taxon>Chordata</taxon>
        <taxon>Craniata</taxon>
        <taxon>Vertebrata</taxon>
        <taxon>Euteleostomi</taxon>
        <taxon>Mammalia</taxon>
        <taxon>Eutheria</taxon>
        <taxon>Euarchontoglires</taxon>
        <taxon>Primates</taxon>
        <taxon>Haplorrhini</taxon>
        <taxon>Catarrhini</taxon>
        <taxon>Hominidae</taxon>
        <taxon>Pan</taxon>
    </lineage>
</organism>
<sequence length="143" mass="16804">QDPYVKEAENLKKYFNAGHSDVADNGTLFLGILKNWKEESDRKIMQSQIVSFYFKLFKNFKDDQSIQKSVETIKEDMNVKFFNSNKKKRDDFEKLTNYSVTDLNVQRKAIHELIQVMAELSPAVKTGKRKRSQMLFRGRRASQ</sequence>
<gene>
    <name type="primary">IFNG</name>
</gene>
<name>IFNG_PANTR</name>